<feature type="signal peptide" evidence="2">
    <location>
        <begin position="1"/>
        <end position="22"/>
    </location>
</feature>
<feature type="chain" id="PRO_0000267484" description="Astakine">
    <location>
        <begin position="23"/>
        <end position="104"/>
    </location>
</feature>
<feature type="disulfide bond" evidence="1">
    <location>
        <begin position="25"/>
        <end position="38"/>
    </location>
</feature>
<feature type="disulfide bond" evidence="1">
    <location>
        <begin position="32"/>
        <end position="50"/>
    </location>
</feature>
<feature type="disulfide bond" evidence="1">
    <location>
        <begin position="37"/>
        <end position="76"/>
    </location>
</feature>
<feature type="disulfide bond" evidence="1">
    <location>
        <begin position="60"/>
        <end position="84"/>
    </location>
</feature>
<feature type="disulfide bond" evidence="1">
    <location>
        <begin position="78"/>
        <end position="91"/>
    </location>
</feature>
<accession>Q56R11</accession>
<keyword id="KW-0903">Direct protein sequencing</keyword>
<keyword id="KW-1015">Disulfide bond</keyword>
<keyword id="KW-0964">Secreted</keyword>
<keyword id="KW-0732">Signal</keyword>
<reference key="1">
    <citation type="journal article" date="2005" name="J. Immunol.">
        <title>An ancient role for a prokineticin domain in invertebrate hematopoiesis.</title>
        <authorList>
            <person name="Soderhall I."/>
            <person name="Kim Y.-A."/>
            <person name="Jiravanichpaisal P."/>
            <person name="Lee S.-Y."/>
            <person name="Soderhall K."/>
        </authorList>
    </citation>
    <scope>NUCLEOTIDE SEQUENCE [MRNA]</scope>
    <scope>PROTEIN SEQUENCE OF 51-69; 72-79 AND 92-104</scope>
    <scope>IDENTIFICATION BY MASS SPECTROMETRY</scope>
</reference>
<proteinExistence type="evidence at protein level"/>
<organism>
    <name type="scientific">Pacifastacus leniusculus</name>
    <name type="common">Signal crayfish</name>
    <dbReference type="NCBI Taxonomy" id="6720"/>
    <lineage>
        <taxon>Eukaryota</taxon>
        <taxon>Metazoa</taxon>
        <taxon>Ecdysozoa</taxon>
        <taxon>Arthropoda</taxon>
        <taxon>Crustacea</taxon>
        <taxon>Multicrustacea</taxon>
        <taxon>Malacostraca</taxon>
        <taxon>Eumalacostraca</taxon>
        <taxon>Eucarida</taxon>
        <taxon>Decapoda</taxon>
        <taxon>Pleocyemata</taxon>
        <taxon>Astacidea</taxon>
        <taxon>Astacoidea</taxon>
        <taxon>Astacidae</taxon>
        <taxon>Pacifastacus</taxon>
    </lineage>
</organism>
<evidence type="ECO:0000250" key="1"/>
<evidence type="ECO:0000255" key="2"/>
<evidence type="ECO:0000305" key="3"/>
<sequence length="104" mass="10949">MKMRGVSVGVLVVAMMSGLAMAGSCNSQEPDCGPSECCLQGWMRYSTRGCAPLGEAGSSCNVFTQAPVKGFYIGMCPCRAGLVCTRPSATCQLPSQDNTLDSYY</sequence>
<comment type="function">
    <text>Cytokine directly involved in hematopoiesis.</text>
</comment>
<comment type="subcellular location">
    <subcellularLocation>
        <location>Secreted</location>
    </subcellularLocation>
</comment>
<comment type="similarity">
    <text evidence="3">Belongs to the AVIT (prokineticin) family.</text>
</comment>
<name>ASTA_PACLE</name>
<protein>
    <recommendedName>
        <fullName>Astakine</fullName>
    </recommendedName>
    <alternativeName>
        <fullName>Prokineticin-like cytokine</fullName>
    </alternativeName>
</protein>
<dbReference type="EMBL" id="AY787656">
    <property type="protein sequence ID" value="AAX14635.1"/>
    <property type="molecule type" value="mRNA"/>
</dbReference>
<dbReference type="SMR" id="Q56R11"/>
<dbReference type="GO" id="GO:0005576">
    <property type="term" value="C:extracellular region"/>
    <property type="evidence" value="ECO:0007669"/>
    <property type="project" value="UniProtKB-SubCell"/>
</dbReference>
<dbReference type="Gene3D" id="2.10.80.10">
    <property type="entry name" value="Lipase, subunit A"/>
    <property type="match status" value="1"/>
</dbReference>
<dbReference type="InterPro" id="IPR023569">
    <property type="entry name" value="Prokineticin_domain"/>
</dbReference>
<dbReference type="Pfam" id="PF06607">
    <property type="entry name" value="Prokineticin"/>
    <property type="match status" value="1"/>
</dbReference>